<organism>
    <name type="scientific">Rhodopseudomonas palustris (strain BisA53)</name>
    <dbReference type="NCBI Taxonomy" id="316055"/>
    <lineage>
        <taxon>Bacteria</taxon>
        <taxon>Pseudomonadati</taxon>
        <taxon>Pseudomonadota</taxon>
        <taxon>Alphaproteobacteria</taxon>
        <taxon>Hyphomicrobiales</taxon>
        <taxon>Nitrobacteraceae</taxon>
        <taxon>Rhodopseudomonas</taxon>
    </lineage>
</organism>
<proteinExistence type="inferred from homology"/>
<protein>
    <recommendedName>
        <fullName evidence="1">Large ribosomal subunit protein uL24</fullName>
    </recommendedName>
    <alternativeName>
        <fullName evidence="2">50S ribosomal protein L24</fullName>
    </alternativeName>
</protein>
<gene>
    <name evidence="1" type="primary">rplX</name>
    <name type="ordered locus">RPE_3575</name>
</gene>
<evidence type="ECO:0000255" key="1">
    <source>
        <dbReference type="HAMAP-Rule" id="MF_01326"/>
    </source>
</evidence>
<evidence type="ECO:0000305" key="2"/>
<comment type="function">
    <text evidence="1">One of two assembly initiator proteins, it binds directly to the 5'-end of the 23S rRNA, where it nucleates assembly of the 50S subunit.</text>
</comment>
<comment type="function">
    <text evidence="1">One of the proteins that surrounds the polypeptide exit tunnel on the outside of the subunit.</text>
</comment>
<comment type="subunit">
    <text evidence="1">Part of the 50S ribosomal subunit.</text>
</comment>
<comment type="similarity">
    <text evidence="1">Belongs to the universal ribosomal protein uL24 family.</text>
</comment>
<feature type="chain" id="PRO_1000052290" description="Large ribosomal subunit protein uL24">
    <location>
        <begin position="1"/>
        <end position="104"/>
    </location>
</feature>
<name>RL24_RHOP5</name>
<sequence length="104" mass="11241">MAAKIRKGDKVIVLTGRDKGRTGEVFEVRPADNKALVRGINIVKRHQKQTQAQEGGIISKEAPINLSNIAIVGKDGKPTRVGFKIQADGKKVRVAKRSGAEIDV</sequence>
<reference key="1">
    <citation type="submission" date="2006-09" db="EMBL/GenBank/DDBJ databases">
        <title>Complete sequence of Rhodopseudomonas palustris BisA53.</title>
        <authorList>
            <consortium name="US DOE Joint Genome Institute"/>
            <person name="Copeland A."/>
            <person name="Lucas S."/>
            <person name="Lapidus A."/>
            <person name="Barry K."/>
            <person name="Detter J.C."/>
            <person name="Glavina del Rio T."/>
            <person name="Hammon N."/>
            <person name="Israni S."/>
            <person name="Dalin E."/>
            <person name="Tice H."/>
            <person name="Pitluck S."/>
            <person name="Chain P."/>
            <person name="Malfatti S."/>
            <person name="Shin M."/>
            <person name="Vergez L."/>
            <person name="Schmutz J."/>
            <person name="Larimer F."/>
            <person name="Land M."/>
            <person name="Hauser L."/>
            <person name="Pelletier D.A."/>
            <person name="Kyrpides N."/>
            <person name="Kim E."/>
            <person name="Harwood C.S."/>
            <person name="Oda Y."/>
            <person name="Richardson P."/>
        </authorList>
    </citation>
    <scope>NUCLEOTIDE SEQUENCE [LARGE SCALE GENOMIC DNA]</scope>
    <source>
        <strain>BisA53</strain>
    </source>
</reference>
<dbReference type="EMBL" id="CP000463">
    <property type="protein sequence ID" value="ABJ07505.1"/>
    <property type="molecule type" value="Genomic_DNA"/>
</dbReference>
<dbReference type="SMR" id="Q07KM9"/>
<dbReference type="STRING" id="316055.RPE_3575"/>
<dbReference type="KEGG" id="rpe:RPE_3575"/>
<dbReference type="eggNOG" id="COG0198">
    <property type="taxonomic scope" value="Bacteria"/>
</dbReference>
<dbReference type="HOGENOM" id="CLU_093315_2_2_5"/>
<dbReference type="OrthoDB" id="9807419at2"/>
<dbReference type="GO" id="GO:1990904">
    <property type="term" value="C:ribonucleoprotein complex"/>
    <property type="evidence" value="ECO:0007669"/>
    <property type="project" value="UniProtKB-KW"/>
</dbReference>
<dbReference type="GO" id="GO:0005840">
    <property type="term" value="C:ribosome"/>
    <property type="evidence" value="ECO:0007669"/>
    <property type="project" value="UniProtKB-KW"/>
</dbReference>
<dbReference type="GO" id="GO:0019843">
    <property type="term" value="F:rRNA binding"/>
    <property type="evidence" value="ECO:0007669"/>
    <property type="project" value="UniProtKB-UniRule"/>
</dbReference>
<dbReference type="GO" id="GO:0003735">
    <property type="term" value="F:structural constituent of ribosome"/>
    <property type="evidence" value="ECO:0007669"/>
    <property type="project" value="InterPro"/>
</dbReference>
<dbReference type="GO" id="GO:0006412">
    <property type="term" value="P:translation"/>
    <property type="evidence" value="ECO:0007669"/>
    <property type="project" value="UniProtKB-UniRule"/>
</dbReference>
<dbReference type="CDD" id="cd06089">
    <property type="entry name" value="KOW_RPL26"/>
    <property type="match status" value="1"/>
</dbReference>
<dbReference type="FunFam" id="2.30.30.30:FF:000004">
    <property type="entry name" value="50S ribosomal protein L24"/>
    <property type="match status" value="1"/>
</dbReference>
<dbReference type="Gene3D" id="2.30.30.30">
    <property type="match status" value="1"/>
</dbReference>
<dbReference type="HAMAP" id="MF_01326_B">
    <property type="entry name" value="Ribosomal_uL24_B"/>
    <property type="match status" value="1"/>
</dbReference>
<dbReference type="InterPro" id="IPR005824">
    <property type="entry name" value="KOW"/>
</dbReference>
<dbReference type="InterPro" id="IPR014722">
    <property type="entry name" value="Rib_uL2_dom2"/>
</dbReference>
<dbReference type="InterPro" id="IPR003256">
    <property type="entry name" value="Ribosomal_uL24"/>
</dbReference>
<dbReference type="InterPro" id="IPR005825">
    <property type="entry name" value="Ribosomal_uL24_CS"/>
</dbReference>
<dbReference type="InterPro" id="IPR041988">
    <property type="entry name" value="Ribosomal_uL24_KOW"/>
</dbReference>
<dbReference type="InterPro" id="IPR008991">
    <property type="entry name" value="Translation_prot_SH3-like_sf"/>
</dbReference>
<dbReference type="NCBIfam" id="TIGR01079">
    <property type="entry name" value="rplX_bact"/>
    <property type="match status" value="1"/>
</dbReference>
<dbReference type="PANTHER" id="PTHR12903">
    <property type="entry name" value="MITOCHONDRIAL RIBOSOMAL PROTEIN L24"/>
    <property type="match status" value="1"/>
</dbReference>
<dbReference type="Pfam" id="PF00467">
    <property type="entry name" value="KOW"/>
    <property type="match status" value="1"/>
</dbReference>
<dbReference type="Pfam" id="PF17136">
    <property type="entry name" value="ribosomal_L24"/>
    <property type="match status" value="1"/>
</dbReference>
<dbReference type="SMART" id="SM00739">
    <property type="entry name" value="KOW"/>
    <property type="match status" value="1"/>
</dbReference>
<dbReference type="SUPFAM" id="SSF50104">
    <property type="entry name" value="Translation proteins SH3-like domain"/>
    <property type="match status" value="1"/>
</dbReference>
<dbReference type="PROSITE" id="PS01108">
    <property type="entry name" value="RIBOSOMAL_L24"/>
    <property type="match status" value="1"/>
</dbReference>
<keyword id="KW-0687">Ribonucleoprotein</keyword>
<keyword id="KW-0689">Ribosomal protein</keyword>
<keyword id="KW-0694">RNA-binding</keyword>
<keyword id="KW-0699">rRNA-binding</keyword>
<accession>Q07KM9</accession>